<accession>Q7N380</accession>
<keyword id="KW-0963">Cytoplasm</keyword>
<keyword id="KW-0378">Hydrolase</keyword>
<keyword id="KW-0546">Nucleotide metabolism</keyword>
<keyword id="KW-1185">Reference proteome</keyword>
<proteinExistence type="inferred from homology"/>
<name>NTPPB_PHOLL</name>
<evidence type="ECO:0000255" key="1">
    <source>
        <dbReference type="HAMAP-Rule" id="MF_00528"/>
    </source>
</evidence>
<evidence type="ECO:0000305" key="2"/>
<protein>
    <recommendedName>
        <fullName evidence="1">7-methyl-GTP pyrophosphatase</fullName>
        <shortName evidence="1">m(7)GTP pyrophosphatase</shortName>
        <ecNumber evidence="1">3.6.1.-</ecNumber>
    </recommendedName>
</protein>
<comment type="function">
    <text evidence="1">Nucleoside triphosphate pyrophosphatase that hydrolyzes 7-methyl-GTP (m(7)GTP). May have a dual role in cell division arrest and in preventing the incorporation of modified nucleotides into cellular nucleic acids.</text>
</comment>
<comment type="catalytic activity">
    <reaction evidence="1">
        <text>N(7)-methyl-GTP + H2O = N(7)-methyl-GMP + diphosphate + H(+)</text>
        <dbReference type="Rhea" id="RHEA:58744"/>
        <dbReference type="ChEBI" id="CHEBI:15377"/>
        <dbReference type="ChEBI" id="CHEBI:15378"/>
        <dbReference type="ChEBI" id="CHEBI:33019"/>
        <dbReference type="ChEBI" id="CHEBI:58285"/>
        <dbReference type="ChEBI" id="CHEBI:87133"/>
    </reaction>
</comment>
<comment type="cofactor">
    <cofactor evidence="1">
        <name>a divalent metal cation</name>
        <dbReference type="ChEBI" id="CHEBI:60240"/>
    </cofactor>
</comment>
<comment type="subcellular location">
    <subcellularLocation>
        <location evidence="1">Cytoplasm</location>
    </subcellularLocation>
</comment>
<comment type="similarity">
    <text evidence="1">Belongs to the Maf family. YceF subfamily.</text>
</comment>
<comment type="sequence caution" evidence="2">
    <conflict type="erroneous initiation">
        <sequence resource="EMBL-CDS" id="CAE15213"/>
    </conflict>
</comment>
<organism>
    <name type="scientific">Photorhabdus laumondii subsp. laumondii (strain DSM 15139 / CIP 105565 / TT01)</name>
    <name type="common">Photorhabdus luminescens subsp. laumondii</name>
    <dbReference type="NCBI Taxonomy" id="243265"/>
    <lineage>
        <taxon>Bacteria</taxon>
        <taxon>Pseudomonadati</taxon>
        <taxon>Pseudomonadota</taxon>
        <taxon>Gammaproteobacteria</taxon>
        <taxon>Enterobacterales</taxon>
        <taxon>Morganellaceae</taxon>
        <taxon>Photorhabdus</taxon>
    </lineage>
</organism>
<gene>
    <name type="ordered locus">plu2839</name>
</gene>
<dbReference type="EC" id="3.6.1.-" evidence="1"/>
<dbReference type="EMBL" id="BX571868">
    <property type="protein sequence ID" value="CAE15213.1"/>
    <property type="status" value="ALT_INIT"/>
    <property type="molecule type" value="Genomic_DNA"/>
</dbReference>
<dbReference type="RefSeq" id="WP_011147059.1">
    <property type="nucleotide sequence ID" value="NC_005126.1"/>
</dbReference>
<dbReference type="SMR" id="Q7N380"/>
<dbReference type="STRING" id="243265.plu2839"/>
<dbReference type="GeneID" id="48849101"/>
<dbReference type="KEGG" id="plu:plu2839"/>
<dbReference type="eggNOG" id="COG0424">
    <property type="taxonomic scope" value="Bacteria"/>
</dbReference>
<dbReference type="HOGENOM" id="CLU_040416_1_0_6"/>
<dbReference type="OrthoDB" id="9813694at2"/>
<dbReference type="Proteomes" id="UP000002514">
    <property type="component" value="Chromosome"/>
</dbReference>
<dbReference type="GO" id="GO:0005737">
    <property type="term" value="C:cytoplasm"/>
    <property type="evidence" value="ECO:0007669"/>
    <property type="project" value="UniProtKB-SubCell"/>
</dbReference>
<dbReference type="GO" id="GO:0047429">
    <property type="term" value="F:nucleoside triphosphate diphosphatase activity"/>
    <property type="evidence" value="ECO:0007669"/>
    <property type="project" value="InterPro"/>
</dbReference>
<dbReference type="GO" id="GO:0009117">
    <property type="term" value="P:nucleotide metabolic process"/>
    <property type="evidence" value="ECO:0007669"/>
    <property type="project" value="UniProtKB-KW"/>
</dbReference>
<dbReference type="CDD" id="cd00555">
    <property type="entry name" value="Maf"/>
    <property type="match status" value="1"/>
</dbReference>
<dbReference type="FunFam" id="3.90.950.10:FF:000005">
    <property type="entry name" value="7-methyl-GTP pyrophosphatase"/>
    <property type="match status" value="1"/>
</dbReference>
<dbReference type="Gene3D" id="3.90.950.10">
    <property type="match status" value="1"/>
</dbReference>
<dbReference type="HAMAP" id="MF_00528">
    <property type="entry name" value="Maf"/>
    <property type="match status" value="1"/>
</dbReference>
<dbReference type="InterPro" id="IPR029001">
    <property type="entry name" value="ITPase-like_fam"/>
</dbReference>
<dbReference type="InterPro" id="IPR003697">
    <property type="entry name" value="Maf-like"/>
</dbReference>
<dbReference type="NCBIfam" id="TIGR00172">
    <property type="entry name" value="maf"/>
    <property type="match status" value="1"/>
</dbReference>
<dbReference type="PANTHER" id="PTHR43213:SF10">
    <property type="entry name" value="7-METHYL-GTP PYROPHOSPHATASE"/>
    <property type="match status" value="1"/>
</dbReference>
<dbReference type="PANTHER" id="PTHR43213">
    <property type="entry name" value="BIFUNCTIONAL DTTP/UTP PYROPHOSPHATASE/METHYLTRANSFERASE PROTEIN-RELATED"/>
    <property type="match status" value="1"/>
</dbReference>
<dbReference type="Pfam" id="PF02545">
    <property type="entry name" value="Maf"/>
    <property type="match status" value="1"/>
</dbReference>
<dbReference type="PIRSF" id="PIRSF006305">
    <property type="entry name" value="Maf"/>
    <property type="match status" value="1"/>
</dbReference>
<dbReference type="SUPFAM" id="SSF52972">
    <property type="entry name" value="ITPase-like"/>
    <property type="match status" value="1"/>
</dbReference>
<reference key="1">
    <citation type="journal article" date="2003" name="Nat. Biotechnol.">
        <title>The genome sequence of the entomopathogenic bacterium Photorhabdus luminescens.</title>
        <authorList>
            <person name="Duchaud E."/>
            <person name="Rusniok C."/>
            <person name="Frangeul L."/>
            <person name="Buchrieser C."/>
            <person name="Givaudan A."/>
            <person name="Taourit S."/>
            <person name="Bocs S."/>
            <person name="Boursaux-Eude C."/>
            <person name="Chandler M."/>
            <person name="Charles J.-F."/>
            <person name="Dassa E."/>
            <person name="Derose R."/>
            <person name="Derzelle S."/>
            <person name="Freyssinet G."/>
            <person name="Gaudriault S."/>
            <person name="Medigue C."/>
            <person name="Lanois A."/>
            <person name="Powell K."/>
            <person name="Siguier P."/>
            <person name="Vincent R."/>
            <person name="Wingate V."/>
            <person name="Zouine M."/>
            <person name="Glaser P."/>
            <person name="Boemare N."/>
            <person name="Danchin A."/>
            <person name="Kunst F."/>
        </authorList>
    </citation>
    <scope>NUCLEOTIDE SEQUENCE [LARGE SCALE GENOMIC DNA]</scope>
    <source>
        <strain>DSM 15139 / CIP 105565 / TT01</strain>
    </source>
</reference>
<feature type="chain" id="PRO_0000123039" description="7-methyl-GTP pyrophosphatase">
    <location>
        <begin position="1"/>
        <end position="196"/>
    </location>
</feature>
<feature type="active site" description="Proton acceptor" evidence="1">
    <location>
        <position position="69"/>
    </location>
</feature>
<feature type="site" description="Important for substrate specificity" evidence="1">
    <location>
        <position position="12"/>
    </location>
</feature>
<feature type="site" description="Important for substrate specificity" evidence="1">
    <location>
        <position position="70"/>
    </location>
</feature>
<feature type="site" description="Important for substrate specificity" evidence="1">
    <location>
        <position position="154"/>
    </location>
</feature>
<sequence length="196" mass="21778">MTQIILASTSAYRRMLLEKLRLPFICAAPNTDETPRMNENAEQLVMRLAQAKAQALQTKYSQHLIIGSDQVCVINGEITGKPHSFEHAFKQLRQASGHCVTFYTGISLFNSKTGITDTRCELFNVYFRELADDEIRAYLTAENPLNCAGSFKSEGLGITLFERLEGKDPNTLIGLPLITLTELLIRQGVNPLTAIG</sequence>